<name>KEX1_ARTOC</name>
<protein>
    <recommendedName>
        <fullName>Pheromone-processing carboxypeptidase KEX1</fullName>
        <ecNumber>3.4.16.6</ecNumber>
    </recommendedName>
    <alternativeName>
        <fullName>Carboxypeptidase D</fullName>
    </alternativeName>
</protein>
<reference key="1">
    <citation type="journal article" date="2012" name="MBio">
        <title>Comparative genome analysis of Trichophyton rubrum and related dermatophytes reveals candidate genes involved in infection.</title>
        <authorList>
            <person name="Martinez D.A."/>
            <person name="Oliver B.G."/>
            <person name="Graeser Y."/>
            <person name="Goldberg J.M."/>
            <person name="Li W."/>
            <person name="Martinez-Rossi N.M."/>
            <person name="Monod M."/>
            <person name="Shelest E."/>
            <person name="Barton R.C."/>
            <person name="Birch E."/>
            <person name="Brakhage A.A."/>
            <person name="Chen Z."/>
            <person name="Gurr S.J."/>
            <person name="Heiman D."/>
            <person name="Heitman J."/>
            <person name="Kosti I."/>
            <person name="Rossi A."/>
            <person name="Saif S."/>
            <person name="Samalova M."/>
            <person name="Saunders C.W."/>
            <person name="Shea T."/>
            <person name="Summerbell R.C."/>
            <person name="Xu J."/>
            <person name="Young S."/>
            <person name="Zeng Q."/>
            <person name="Birren B.W."/>
            <person name="Cuomo C.A."/>
            <person name="White T.C."/>
        </authorList>
    </citation>
    <scope>NUCLEOTIDE SEQUENCE [LARGE SCALE GENOMIC DNA]</scope>
    <source>
        <strain>ATCC MYA-4605 / CBS 113480</strain>
    </source>
</reference>
<feature type="signal peptide" evidence="2">
    <location>
        <begin position="1"/>
        <end position="38"/>
    </location>
</feature>
<feature type="chain" id="PRO_0000411900" description="Pheromone-processing carboxypeptidase KEX1">
    <location>
        <begin position="39"/>
        <end position="636"/>
    </location>
</feature>
<feature type="topological domain" description="Lumenal" evidence="2">
    <location>
        <begin position="39"/>
        <end position="522"/>
    </location>
</feature>
<feature type="transmembrane region" description="Helical" evidence="2">
    <location>
        <begin position="523"/>
        <end position="543"/>
    </location>
</feature>
<feature type="topological domain" description="Cytoplasmic" evidence="2">
    <location>
        <begin position="544"/>
        <end position="636"/>
    </location>
</feature>
<feature type="region of interest" description="Disordered" evidence="4">
    <location>
        <begin position="575"/>
        <end position="636"/>
    </location>
</feature>
<feature type="compositionally biased region" description="Basic and acidic residues" evidence="4">
    <location>
        <begin position="580"/>
        <end position="590"/>
    </location>
</feature>
<feature type="active site" evidence="3">
    <location>
        <position position="190"/>
    </location>
</feature>
<feature type="active site" evidence="3">
    <location>
        <position position="389"/>
    </location>
</feature>
<feature type="active site" evidence="3">
    <location>
        <position position="451"/>
    </location>
</feature>
<feature type="glycosylation site" description="N-linked (GlcNAc...) asparagine" evidence="2">
    <location>
        <position position="213"/>
    </location>
</feature>
<feature type="glycosylation site" description="N-linked (GlcNAc...) asparagine" evidence="2">
    <location>
        <position position="440"/>
    </location>
</feature>
<feature type="glycosylation site" description="N-linked (GlcNAc...) asparagine" evidence="2">
    <location>
        <position position="448"/>
    </location>
</feature>
<feature type="glycosylation site" description="N-linked (GlcNAc...) asparagine" evidence="2">
    <location>
        <position position="500"/>
    </location>
</feature>
<dbReference type="EC" id="3.4.16.6"/>
<dbReference type="EMBL" id="DS995705">
    <property type="protein sequence ID" value="EEQ33310.1"/>
    <property type="molecule type" value="Genomic_DNA"/>
</dbReference>
<dbReference type="RefSeq" id="XP_002846260.1">
    <property type="nucleotide sequence ID" value="XM_002846214.1"/>
</dbReference>
<dbReference type="SMR" id="C5FTV7"/>
<dbReference type="STRING" id="554155.C5FTV7"/>
<dbReference type="ESTHER" id="artoc-kex1">
    <property type="family name" value="Carboxypeptidase_S10"/>
</dbReference>
<dbReference type="MEROPS" id="S10.007"/>
<dbReference type="GlyCosmos" id="C5FTV7">
    <property type="glycosylation" value="4 sites, No reported glycans"/>
</dbReference>
<dbReference type="GeneID" id="9228429"/>
<dbReference type="VEuPathDB" id="FungiDB:MCYG_06129"/>
<dbReference type="eggNOG" id="KOG1282">
    <property type="taxonomic scope" value="Eukaryota"/>
</dbReference>
<dbReference type="HOGENOM" id="CLU_008523_11_0_1"/>
<dbReference type="OMA" id="EMADQFV"/>
<dbReference type="OrthoDB" id="443318at2759"/>
<dbReference type="Proteomes" id="UP000002035">
    <property type="component" value="Unassembled WGS sequence"/>
</dbReference>
<dbReference type="GO" id="GO:0016020">
    <property type="term" value="C:membrane"/>
    <property type="evidence" value="ECO:0007669"/>
    <property type="project" value="UniProtKB-KW"/>
</dbReference>
<dbReference type="GO" id="GO:0005802">
    <property type="term" value="C:trans-Golgi network"/>
    <property type="evidence" value="ECO:0007669"/>
    <property type="project" value="TreeGrafter"/>
</dbReference>
<dbReference type="GO" id="GO:0004185">
    <property type="term" value="F:serine-type carboxypeptidase activity"/>
    <property type="evidence" value="ECO:0007669"/>
    <property type="project" value="UniProtKB-EC"/>
</dbReference>
<dbReference type="GO" id="GO:0006915">
    <property type="term" value="P:apoptotic process"/>
    <property type="evidence" value="ECO:0007669"/>
    <property type="project" value="UniProtKB-KW"/>
</dbReference>
<dbReference type="GO" id="GO:0006508">
    <property type="term" value="P:proteolysis"/>
    <property type="evidence" value="ECO:0007669"/>
    <property type="project" value="UniProtKB-KW"/>
</dbReference>
<dbReference type="FunFam" id="3.40.50.1820:FF:000121">
    <property type="entry name" value="Carboxypeptidase D"/>
    <property type="match status" value="1"/>
</dbReference>
<dbReference type="Gene3D" id="3.40.50.1820">
    <property type="entry name" value="alpha/beta hydrolase"/>
    <property type="match status" value="1"/>
</dbReference>
<dbReference type="InterPro" id="IPR029058">
    <property type="entry name" value="AB_hydrolase_fold"/>
</dbReference>
<dbReference type="InterPro" id="IPR001563">
    <property type="entry name" value="Peptidase_S10"/>
</dbReference>
<dbReference type="InterPro" id="IPR018202">
    <property type="entry name" value="Ser_caboxypep_ser_AS"/>
</dbReference>
<dbReference type="PANTHER" id="PTHR11802:SF190">
    <property type="entry name" value="PHEROMONE-PROCESSING CARBOXYPEPTIDASE KEX1"/>
    <property type="match status" value="1"/>
</dbReference>
<dbReference type="PANTHER" id="PTHR11802">
    <property type="entry name" value="SERINE PROTEASE FAMILY S10 SERINE CARBOXYPEPTIDASE"/>
    <property type="match status" value="1"/>
</dbReference>
<dbReference type="Pfam" id="PF00450">
    <property type="entry name" value="Peptidase_S10"/>
    <property type="match status" value="1"/>
</dbReference>
<dbReference type="PRINTS" id="PR00724">
    <property type="entry name" value="CRBOXYPTASEC"/>
</dbReference>
<dbReference type="SUPFAM" id="SSF53474">
    <property type="entry name" value="alpha/beta-Hydrolases"/>
    <property type="match status" value="1"/>
</dbReference>
<dbReference type="PROSITE" id="PS00131">
    <property type="entry name" value="CARBOXYPEPT_SER_SER"/>
    <property type="match status" value="1"/>
</dbReference>
<evidence type="ECO:0000250" key="1"/>
<evidence type="ECO:0000255" key="2"/>
<evidence type="ECO:0000255" key="3">
    <source>
        <dbReference type="PROSITE-ProRule" id="PRU10074"/>
    </source>
</evidence>
<evidence type="ECO:0000256" key="4">
    <source>
        <dbReference type="SAM" id="MobiDB-lite"/>
    </source>
</evidence>
<evidence type="ECO:0000305" key="5"/>
<proteinExistence type="inferred from homology"/>
<organism>
    <name type="scientific">Arthroderma otae (strain ATCC MYA-4605 / CBS 113480)</name>
    <name type="common">Microsporum canis</name>
    <dbReference type="NCBI Taxonomy" id="554155"/>
    <lineage>
        <taxon>Eukaryota</taxon>
        <taxon>Fungi</taxon>
        <taxon>Dikarya</taxon>
        <taxon>Ascomycota</taxon>
        <taxon>Pezizomycotina</taxon>
        <taxon>Eurotiomycetes</taxon>
        <taxon>Eurotiomycetidae</taxon>
        <taxon>Onygenales</taxon>
        <taxon>Arthrodermataceae</taxon>
        <taxon>Microsporum</taxon>
    </lineage>
</organism>
<accession>C5FTV7</accession>
<gene>
    <name type="primary">KEX1</name>
    <name type="ORF">MCYG_06129</name>
</gene>
<comment type="function">
    <text evidence="1">Protease with a carboxypeptidase B-like function involved in the C-terminal processing of the lysine and arginine residues from protein precursors. Promotes cell fusion and is involved in the programmed cell death (By similarity).</text>
</comment>
<comment type="catalytic activity">
    <reaction>
        <text>Preferential release of a C-terminal arginine or lysine residue.</text>
        <dbReference type="EC" id="3.4.16.6"/>
    </reaction>
</comment>
<comment type="subcellular location">
    <subcellularLocation>
        <location evidence="1">Golgi apparatus</location>
        <location evidence="1">trans-Golgi network membrane</location>
        <topology evidence="1">Single-pass type I membrane protein</topology>
    </subcellularLocation>
</comment>
<comment type="similarity">
    <text evidence="5">Belongs to the peptidase S10 family.</text>
</comment>
<sequence>MSATHKMRYNLQLVLPSNTRARWAWLLLLLSNPAAVLAKCASDYFVHSLPGQPEGSVLKMHAGHIEIDSEHKGNLFFWHYQNRHIANRQRTVIWLNGGPGCSSMDGALMEVGPYRLKDDHSLVYNEGSWDEFANLLFVDQPVGTGFSYVSTDSYVHELGPMADQFIIFLDRWFKLFPEYENDDIYLAGESYAGQYIPYIAKAIVKRNEKLPANQTAWNVEGLIIGNGWIAPNEQYRSYLTYAYKEGILKESSEGAQAAEAQLSQCSSKLSEVGKFGIHIDECERVMELILDTTKINGKCLNMYDIRLDDTSDSCGMNWPPDISSVTTYLRRPDVVKALNINEDKTTGWRECSPGVGRNLRATESVPSIQLLPGLLEGGIPVLLFSGDKDLICNHVGTEDLIQNMKWSRGTGFELSPGVRAPRHDWVFEGLPAGVYQQARNLTYVKFYNASHMVPFDFPRRSRDMLDRFLGVDITTIGGDPADSRIDGLKGTITSVGAHPNSTTAEEREKEKMKIAAWQAYYKSGEIALIVVAIAATIWGFFVWRSKRREQGGEYQGIYPNLESLSSSSLSTFRSKRRGRHDIESTSRSDEAELESLYNGPEISEVLETQDGRQRELSADGSNEKASASLMVERNLR</sequence>
<keyword id="KW-0053">Apoptosis</keyword>
<keyword id="KW-0121">Carboxypeptidase</keyword>
<keyword id="KW-0325">Glycoprotein</keyword>
<keyword id="KW-0333">Golgi apparatus</keyword>
<keyword id="KW-0378">Hydrolase</keyword>
<keyword id="KW-0472">Membrane</keyword>
<keyword id="KW-0645">Protease</keyword>
<keyword id="KW-1185">Reference proteome</keyword>
<keyword id="KW-0732">Signal</keyword>
<keyword id="KW-0812">Transmembrane</keyword>
<keyword id="KW-1133">Transmembrane helix</keyword>